<proteinExistence type="inferred from homology"/>
<evidence type="ECO:0000250" key="1"/>
<evidence type="ECO:0000269" key="2">
    <source>
    </source>
</evidence>
<evidence type="ECO:0000303" key="3">
    <source>
    </source>
</evidence>
<evidence type="ECO:0000305" key="4"/>
<evidence type="ECO:0000312" key="5">
    <source>
        <dbReference type="EMBL" id="BAA12629.1"/>
    </source>
</evidence>
<evidence type="ECO:0000312" key="6">
    <source>
        <dbReference type="EMBL" id="CAB14303.1"/>
    </source>
</evidence>
<feature type="chain" id="PRO_0000173905" description="DNA polymerase IV 2">
    <location>
        <begin position="1"/>
        <end position="412"/>
    </location>
</feature>
<feature type="domain" description="UmuC">
    <location>
        <begin position="7"/>
        <end position="192"/>
    </location>
</feature>
<feature type="active site" evidence="1">
    <location>
        <position position="108"/>
    </location>
</feature>
<feature type="binding site" evidence="1">
    <location>
        <position position="11"/>
    </location>
    <ligand>
        <name>Mg(2+)</name>
        <dbReference type="ChEBI" id="CHEBI:18420"/>
    </ligand>
</feature>
<feature type="binding site" evidence="1">
    <location>
        <position position="107"/>
    </location>
    <ligand>
        <name>Mg(2+)</name>
        <dbReference type="ChEBI" id="CHEBI:18420"/>
    </ligand>
</feature>
<feature type="site" description="Substrate discrimination" evidence="1">
    <location>
        <position position="16"/>
    </location>
</feature>
<comment type="function">
    <text evidence="1">Poorly processive, error-prone DNA polymerase involved in untargeted mutagenesis. Copies undamaged DNA at stalled replication forks, which arise in vivo from mismatched or misaligned primer ends. These misaligned primers can be extended by PolIV. Exhibits no 3'-5' exonuclease (proofreading) activity. May be involved in translesion synthesis (TSL), in conjunction with the beta clamp from PolIII (By similarity).</text>
</comment>
<comment type="catalytic activity">
    <reaction>
        <text>DNA(n) + a 2'-deoxyribonucleoside 5'-triphosphate = DNA(n+1) + diphosphate</text>
        <dbReference type="Rhea" id="RHEA:22508"/>
        <dbReference type="Rhea" id="RHEA-COMP:17339"/>
        <dbReference type="Rhea" id="RHEA-COMP:17340"/>
        <dbReference type="ChEBI" id="CHEBI:33019"/>
        <dbReference type="ChEBI" id="CHEBI:61560"/>
        <dbReference type="ChEBI" id="CHEBI:173112"/>
        <dbReference type="EC" id="2.7.7.7"/>
    </reaction>
</comment>
<comment type="cofactor">
    <cofactor evidence="1">
        <name>Mg(2+)</name>
        <dbReference type="ChEBI" id="CHEBI:18420"/>
    </cofactor>
    <text evidence="1">Binds 2 magnesium ions per subunit.</text>
</comment>
<comment type="subunit">
    <text evidence="1">Monomer.</text>
</comment>
<comment type="subcellular location">
    <subcellularLocation>
        <location evidence="1">Cytoplasm</location>
    </subcellularLocation>
</comment>
<comment type="disruption phenotype">
    <text evidence="2">No visible phenotype in the absence of DNA damage; in the presence of H(2)O(2) or methyl methanesulfonate (MMS) cells grow poorly on solid medium. A double polY2-rarA deletion is less sensitive to both H(2)O(2) and MMS.</text>
</comment>
<comment type="similarity">
    <text evidence="4">Belongs to the DNA polymerase type-Y family.</text>
</comment>
<keyword id="KW-0963">Cytoplasm</keyword>
<keyword id="KW-0227">DNA damage</keyword>
<keyword id="KW-0234">DNA repair</keyword>
<keyword id="KW-0235">DNA replication</keyword>
<keyword id="KW-0238">DNA-binding</keyword>
<keyword id="KW-0239">DNA-directed DNA polymerase</keyword>
<keyword id="KW-0460">Magnesium</keyword>
<keyword id="KW-0479">Metal-binding</keyword>
<keyword id="KW-0515">Mutator protein</keyword>
<keyword id="KW-0548">Nucleotidyltransferase</keyword>
<keyword id="KW-1185">Reference proteome</keyword>
<keyword id="KW-0808">Transferase</keyword>
<sequence length="412" mass="45944">MMKEKVIFLVDMQSFYASVEKAENPHLKNRPVIVSGDPEKRGGVVLAACPLAKQKGVVNASRLWEAQEKCPEAVVLRPRMQRYIDVSLQITAILEEYTDLVEPYSIDEQFMDITGSQKLFGTPMEIAKSIQGRIMREIGVYARVGIGPNKALAKIACDNFAKKNKNGIFTLTKENMKTEMWPLPVGSMFGVGSRMKHHLNRMGISTIGGLAAFPLDLLKKKWGINGHVLWMTANGIDYSPVSTSSLDGQKAIGHGMTLPRDYEHFDKEIKVVLLELSEEVCRRSRNAGVMGQTVSVSCRGADFDWPTGFNRQVKLAEPTNSTQDVYEAVRRLFLTFWDGKPVRRLGVNLSQLSSDDIWQLNLFQDYAKKMSLGYVMDGIKNRFGDTAIIRAASLTAAGQAFERAAKIGGHYK</sequence>
<reference key="1">
    <citation type="journal article" date="1996" name="Microbiology">
        <title>Systematic sequencing of the 283 kb 210 degrees-232 degrees region of the Bacillus subtilis genome containing the skin element and many sporulation genes.</title>
        <authorList>
            <person name="Mizuno M."/>
            <person name="Masuda S."/>
            <person name="Takemaru K."/>
            <person name="Hosono S."/>
            <person name="Sato T."/>
            <person name="Takeuchi M."/>
            <person name="Kobayashi Y."/>
        </authorList>
    </citation>
    <scope>NUCLEOTIDE SEQUENCE [GENOMIC DNA]</scope>
    <source>
        <strain>168 / JH642</strain>
    </source>
</reference>
<reference key="2">
    <citation type="journal article" date="1997" name="Nature">
        <title>The complete genome sequence of the Gram-positive bacterium Bacillus subtilis.</title>
        <authorList>
            <person name="Kunst F."/>
            <person name="Ogasawara N."/>
            <person name="Moszer I."/>
            <person name="Albertini A.M."/>
            <person name="Alloni G."/>
            <person name="Azevedo V."/>
            <person name="Bertero M.G."/>
            <person name="Bessieres P."/>
            <person name="Bolotin A."/>
            <person name="Borchert S."/>
            <person name="Borriss R."/>
            <person name="Boursier L."/>
            <person name="Brans A."/>
            <person name="Braun M."/>
            <person name="Brignell S.C."/>
            <person name="Bron S."/>
            <person name="Brouillet S."/>
            <person name="Bruschi C.V."/>
            <person name="Caldwell B."/>
            <person name="Capuano V."/>
            <person name="Carter N.M."/>
            <person name="Choi S.-K."/>
            <person name="Codani J.-J."/>
            <person name="Connerton I.F."/>
            <person name="Cummings N.J."/>
            <person name="Daniel R.A."/>
            <person name="Denizot F."/>
            <person name="Devine K.M."/>
            <person name="Duesterhoeft A."/>
            <person name="Ehrlich S.D."/>
            <person name="Emmerson P.T."/>
            <person name="Entian K.-D."/>
            <person name="Errington J."/>
            <person name="Fabret C."/>
            <person name="Ferrari E."/>
            <person name="Foulger D."/>
            <person name="Fritz C."/>
            <person name="Fujita M."/>
            <person name="Fujita Y."/>
            <person name="Fuma S."/>
            <person name="Galizzi A."/>
            <person name="Galleron N."/>
            <person name="Ghim S.-Y."/>
            <person name="Glaser P."/>
            <person name="Goffeau A."/>
            <person name="Golightly E.J."/>
            <person name="Grandi G."/>
            <person name="Guiseppi G."/>
            <person name="Guy B.J."/>
            <person name="Haga K."/>
            <person name="Haiech J."/>
            <person name="Harwood C.R."/>
            <person name="Henaut A."/>
            <person name="Hilbert H."/>
            <person name="Holsappel S."/>
            <person name="Hosono S."/>
            <person name="Hullo M.-F."/>
            <person name="Itaya M."/>
            <person name="Jones L.-M."/>
            <person name="Joris B."/>
            <person name="Karamata D."/>
            <person name="Kasahara Y."/>
            <person name="Klaerr-Blanchard M."/>
            <person name="Klein C."/>
            <person name="Kobayashi Y."/>
            <person name="Koetter P."/>
            <person name="Koningstein G."/>
            <person name="Krogh S."/>
            <person name="Kumano M."/>
            <person name="Kurita K."/>
            <person name="Lapidus A."/>
            <person name="Lardinois S."/>
            <person name="Lauber J."/>
            <person name="Lazarevic V."/>
            <person name="Lee S.-M."/>
            <person name="Levine A."/>
            <person name="Liu H."/>
            <person name="Masuda S."/>
            <person name="Mauel C."/>
            <person name="Medigue C."/>
            <person name="Medina N."/>
            <person name="Mellado R.P."/>
            <person name="Mizuno M."/>
            <person name="Moestl D."/>
            <person name="Nakai S."/>
            <person name="Noback M."/>
            <person name="Noone D."/>
            <person name="O'Reilly M."/>
            <person name="Ogawa K."/>
            <person name="Ogiwara A."/>
            <person name="Oudega B."/>
            <person name="Park S.-H."/>
            <person name="Parro V."/>
            <person name="Pohl T.M."/>
            <person name="Portetelle D."/>
            <person name="Porwollik S."/>
            <person name="Prescott A.M."/>
            <person name="Presecan E."/>
            <person name="Pujic P."/>
            <person name="Purnelle B."/>
            <person name="Rapoport G."/>
            <person name="Rey M."/>
            <person name="Reynolds S."/>
            <person name="Rieger M."/>
            <person name="Rivolta C."/>
            <person name="Rocha E."/>
            <person name="Roche B."/>
            <person name="Rose M."/>
            <person name="Sadaie Y."/>
            <person name="Sato T."/>
            <person name="Scanlan E."/>
            <person name="Schleich S."/>
            <person name="Schroeter R."/>
            <person name="Scoffone F."/>
            <person name="Sekiguchi J."/>
            <person name="Sekowska A."/>
            <person name="Seror S.J."/>
            <person name="Serror P."/>
            <person name="Shin B.-S."/>
            <person name="Soldo B."/>
            <person name="Sorokin A."/>
            <person name="Tacconi E."/>
            <person name="Takagi T."/>
            <person name="Takahashi H."/>
            <person name="Takemaru K."/>
            <person name="Takeuchi M."/>
            <person name="Tamakoshi A."/>
            <person name="Tanaka T."/>
            <person name="Terpstra P."/>
            <person name="Tognoni A."/>
            <person name="Tosato V."/>
            <person name="Uchiyama S."/>
            <person name="Vandenbol M."/>
            <person name="Vannier F."/>
            <person name="Vassarotti A."/>
            <person name="Viari A."/>
            <person name="Wambutt R."/>
            <person name="Wedler E."/>
            <person name="Wedler H."/>
            <person name="Weitzenegger T."/>
            <person name="Winters P."/>
            <person name="Wipat A."/>
            <person name="Yamamoto H."/>
            <person name="Yamane K."/>
            <person name="Yasumoto K."/>
            <person name="Yata K."/>
            <person name="Yoshida K."/>
            <person name="Yoshikawa H.-F."/>
            <person name="Zumstein E."/>
            <person name="Yoshikawa H."/>
            <person name="Danchin A."/>
        </authorList>
    </citation>
    <scope>NUCLEOTIDE SEQUENCE [LARGE SCALE GENOMIC DNA]</scope>
    <source>
        <strain>168</strain>
    </source>
</reference>
<reference key="3">
    <citation type="journal article" date="2019" name="DNA Repair">
        <title>Bacillus subtilis RarA acts at the interplay between replication and repair-by-recombination.</title>
        <authorList>
            <person name="Romero H."/>
            <person name="Torres R."/>
            <person name="Hernandez-Tamayo R."/>
            <person name="Carrasco B."/>
            <person name="Ayora S."/>
            <person name="Graumann P.L."/>
            <person name="Alonso J.C."/>
        </authorList>
    </citation>
    <scope>DISRUPTION PHENOTYPE</scope>
    <source>
        <strain>168 / YB886 / BG214</strain>
    </source>
</reference>
<name>DPO42_BACSU</name>
<accession>P54560</accession>
<gene>
    <name type="primary">dinB2</name>
    <name evidence="3" type="synonym">polY2</name>
    <name evidence="6" type="synonym">polYB</name>
    <name evidence="5" type="synonym">yqjW</name>
    <name type="ordered locus">BSU23710</name>
</gene>
<organism>
    <name type="scientific">Bacillus subtilis (strain 168)</name>
    <dbReference type="NCBI Taxonomy" id="224308"/>
    <lineage>
        <taxon>Bacteria</taxon>
        <taxon>Bacillati</taxon>
        <taxon>Bacillota</taxon>
        <taxon>Bacilli</taxon>
        <taxon>Bacillales</taxon>
        <taxon>Bacillaceae</taxon>
        <taxon>Bacillus</taxon>
    </lineage>
</organism>
<dbReference type="EC" id="2.7.7.7"/>
<dbReference type="EMBL" id="D84432">
    <property type="protein sequence ID" value="BAA12629.1"/>
    <property type="molecule type" value="Genomic_DNA"/>
</dbReference>
<dbReference type="EMBL" id="AL009126">
    <property type="protein sequence ID" value="CAB14303.1"/>
    <property type="molecule type" value="Genomic_DNA"/>
</dbReference>
<dbReference type="PIR" id="G69965">
    <property type="entry name" value="G69965"/>
</dbReference>
<dbReference type="RefSeq" id="NP_390252.1">
    <property type="nucleotide sequence ID" value="NC_000964.3"/>
</dbReference>
<dbReference type="RefSeq" id="WP_010886562.1">
    <property type="nucleotide sequence ID" value="NZ_OZ025638.1"/>
</dbReference>
<dbReference type="SMR" id="P54560"/>
<dbReference type="FunCoup" id="P54560">
    <property type="interactions" value="682"/>
</dbReference>
<dbReference type="IntAct" id="P54560">
    <property type="interactions" value="1"/>
</dbReference>
<dbReference type="STRING" id="224308.BSU23710"/>
<dbReference type="PaxDb" id="224308-BSU23710"/>
<dbReference type="EnsemblBacteria" id="CAB14303">
    <property type="protein sequence ID" value="CAB14303"/>
    <property type="gene ID" value="BSU_23710"/>
</dbReference>
<dbReference type="GeneID" id="938705"/>
<dbReference type="KEGG" id="bsu:BSU23710"/>
<dbReference type="PATRIC" id="fig|224308.43.peg.2473"/>
<dbReference type="eggNOG" id="COG0389">
    <property type="taxonomic scope" value="Bacteria"/>
</dbReference>
<dbReference type="InParanoid" id="P54560"/>
<dbReference type="OrthoDB" id="9808813at2"/>
<dbReference type="PhylomeDB" id="P54560"/>
<dbReference type="BioCyc" id="BSUB:BSU23710-MONOMER"/>
<dbReference type="Proteomes" id="UP000001570">
    <property type="component" value="Chromosome"/>
</dbReference>
<dbReference type="GO" id="GO:0005737">
    <property type="term" value="C:cytoplasm"/>
    <property type="evidence" value="ECO:0007669"/>
    <property type="project" value="UniProtKB-SubCell"/>
</dbReference>
<dbReference type="GO" id="GO:0003684">
    <property type="term" value="F:damaged DNA binding"/>
    <property type="evidence" value="ECO:0007669"/>
    <property type="project" value="InterPro"/>
</dbReference>
<dbReference type="GO" id="GO:0003887">
    <property type="term" value="F:DNA-directed DNA polymerase activity"/>
    <property type="evidence" value="ECO:0000318"/>
    <property type="project" value="GO_Central"/>
</dbReference>
<dbReference type="GO" id="GO:0000287">
    <property type="term" value="F:magnesium ion binding"/>
    <property type="evidence" value="ECO:0007669"/>
    <property type="project" value="UniProtKB-UniRule"/>
</dbReference>
<dbReference type="GO" id="GO:0006261">
    <property type="term" value="P:DNA-templated DNA replication"/>
    <property type="evidence" value="ECO:0007669"/>
    <property type="project" value="UniProtKB-UniRule"/>
</dbReference>
<dbReference type="GO" id="GO:0042276">
    <property type="term" value="P:error-prone translesion synthesis"/>
    <property type="evidence" value="ECO:0000318"/>
    <property type="project" value="GO_Central"/>
</dbReference>
<dbReference type="GO" id="GO:0009432">
    <property type="term" value="P:SOS response"/>
    <property type="evidence" value="ECO:0000318"/>
    <property type="project" value="GO_Central"/>
</dbReference>
<dbReference type="CDD" id="cd01700">
    <property type="entry name" value="PolY_Pol_V_umuC"/>
    <property type="match status" value="1"/>
</dbReference>
<dbReference type="Gene3D" id="3.30.70.270">
    <property type="match status" value="1"/>
</dbReference>
<dbReference type="Gene3D" id="3.40.1170.60">
    <property type="match status" value="1"/>
</dbReference>
<dbReference type="Gene3D" id="1.10.150.20">
    <property type="entry name" value="5' to 3' exonuclease, C-terminal subdomain"/>
    <property type="match status" value="1"/>
</dbReference>
<dbReference type="Gene3D" id="3.30.1490.100">
    <property type="entry name" value="DNA polymerase, Y-family, little finger domain"/>
    <property type="match status" value="1"/>
</dbReference>
<dbReference type="HAMAP" id="MF_01113">
    <property type="entry name" value="DNApol_IV"/>
    <property type="match status" value="1"/>
</dbReference>
<dbReference type="InterPro" id="IPR043502">
    <property type="entry name" value="DNA/RNA_pol_sf"/>
</dbReference>
<dbReference type="InterPro" id="IPR036775">
    <property type="entry name" value="DNA_pol_Y-fam_lit_finger_sf"/>
</dbReference>
<dbReference type="InterPro" id="IPR017961">
    <property type="entry name" value="DNA_pol_Y-fam_little_finger"/>
</dbReference>
<dbReference type="InterPro" id="IPR050116">
    <property type="entry name" value="DNA_polymerase-Y"/>
</dbReference>
<dbReference type="InterPro" id="IPR022880">
    <property type="entry name" value="DNApol_IV"/>
</dbReference>
<dbReference type="InterPro" id="IPR053848">
    <property type="entry name" value="IMS_HHH_1"/>
</dbReference>
<dbReference type="InterPro" id="IPR043128">
    <property type="entry name" value="Rev_trsase/Diguanyl_cyclase"/>
</dbReference>
<dbReference type="InterPro" id="IPR001126">
    <property type="entry name" value="UmuC"/>
</dbReference>
<dbReference type="NCBIfam" id="NF002848">
    <property type="entry name" value="PRK03103.1"/>
    <property type="match status" value="1"/>
</dbReference>
<dbReference type="PANTHER" id="PTHR11076">
    <property type="entry name" value="DNA REPAIR POLYMERASE UMUC / TRANSFERASE FAMILY MEMBER"/>
    <property type="match status" value="1"/>
</dbReference>
<dbReference type="PANTHER" id="PTHR11076:SF35">
    <property type="entry name" value="DNA REPAIR PROTEIN HOMOLOG YOBH"/>
    <property type="match status" value="1"/>
</dbReference>
<dbReference type="Pfam" id="PF00817">
    <property type="entry name" value="IMS"/>
    <property type="match status" value="1"/>
</dbReference>
<dbReference type="Pfam" id="PF11799">
    <property type="entry name" value="IMS_C"/>
    <property type="match status" value="1"/>
</dbReference>
<dbReference type="Pfam" id="PF21999">
    <property type="entry name" value="IMS_HHH_1"/>
    <property type="match status" value="1"/>
</dbReference>
<dbReference type="SUPFAM" id="SSF56672">
    <property type="entry name" value="DNA/RNA polymerases"/>
    <property type="match status" value="1"/>
</dbReference>
<dbReference type="SUPFAM" id="SSF100879">
    <property type="entry name" value="Lesion bypass DNA polymerase (Y-family), little finger domain"/>
    <property type="match status" value="1"/>
</dbReference>
<dbReference type="PROSITE" id="PS50173">
    <property type="entry name" value="UMUC"/>
    <property type="match status" value="1"/>
</dbReference>
<protein>
    <recommendedName>
        <fullName>DNA polymerase IV 2</fullName>
        <shortName>Pol IV 2</shortName>
        <ecNumber>2.7.7.7</ecNumber>
    </recommendedName>
    <alternativeName>
        <fullName evidence="3">Error-prone translesion DNA polymerase PolY2</fullName>
    </alternativeName>
</protein>